<organism>
    <name type="scientific">Schizosaccharomyces japonicus</name>
    <name type="common">Fission yeast</name>
    <dbReference type="NCBI Taxonomy" id="4897"/>
    <lineage>
        <taxon>Eukaryota</taxon>
        <taxon>Fungi</taxon>
        <taxon>Dikarya</taxon>
        <taxon>Ascomycota</taxon>
        <taxon>Taphrinomycotina</taxon>
        <taxon>Schizosaccharomycetes</taxon>
        <taxon>Schizosaccharomycetales</taxon>
        <taxon>Schizosaccharomycetaceae</taxon>
        <taxon>Schizosaccharomyces</taxon>
    </lineage>
</organism>
<dbReference type="EMBL" id="AF159163">
    <property type="protein sequence ID" value="AAD41900.1"/>
    <property type="molecule type" value="Genomic_DNA"/>
</dbReference>
<dbReference type="SMR" id="Q9Y882"/>
<dbReference type="VEuPathDB" id="FungiDB:SJAG_01215"/>
<dbReference type="OMA" id="HRYISIL"/>
<dbReference type="GO" id="GO:0005737">
    <property type="term" value="C:cytoplasm"/>
    <property type="evidence" value="ECO:0007669"/>
    <property type="project" value="UniProtKB-KW"/>
</dbReference>
<dbReference type="GO" id="GO:0000923">
    <property type="term" value="C:equatorial microtubule organizing center"/>
    <property type="evidence" value="ECO:0007669"/>
    <property type="project" value="EnsemblFungi"/>
</dbReference>
<dbReference type="GO" id="GO:0000931">
    <property type="term" value="C:gamma-tubulin ring complex"/>
    <property type="evidence" value="ECO:0007669"/>
    <property type="project" value="EnsemblFungi"/>
</dbReference>
<dbReference type="GO" id="GO:0008275">
    <property type="term" value="C:gamma-tubulin small complex"/>
    <property type="evidence" value="ECO:0007669"/>
    <property type="project" value="EnsemblFungi"/>
</dbReference>
<dbReference type="GO" id="GO:0061496">
    <property type="term" value="C:half bridge of mitotic spindle pole body"/>
    <property type="evidence" value="ECO:0007669"/>
    <property type="project" value="EnsemblFungi"/>
</dbReference>
<dbReference type="GO" id="GO:0061497">
    <property type="term" value="C:inner plaque of mitotic spindle pole body"/>
    <property type="evidence" value="ECO:0007669"/>
    <property type="project" value="EnsemblFungi"/>
</dbReference>
<dbReference type="GO" id="GO:0031021">
    <property type="term" value="C:interphase microtubule organizing center"/>
    <property type="evidence" value="ECO:0007669"/>
    <property type="project" value="EnsemblFungi"/>
</dbReference>
<dbReference type="GO" id="GO:0043332">
    <property type="term" value="C:mating projection tip"/>
    <property type="evidence" value="ECO:0007669"/>
    <property type="project" value="EnsemblFungi"/>
</dbReference>
<dbReference type="GO" id="GO:0005874">
    <property type="term" value="C:microtubule"/>
    <property type="evidence" value="ECO:0007669"/>
    <property type="project" value="UniProtKB-KW"/>
</dbReference>
<dbReference type="GO" id="GO:0005634">
    <property type="term" value="C:nucleus"/>
    <property type="evidence" value="ECO:0007669"/>
    <property type="project" value="EnsemblFungi"/>
</dbReference>
<dbReference type="GO" id="GO:0071957">
    <property type="term" value="C:old mitotic spindle pole body"/>
    <property type="evidence" value="ECO:0007669"/>
    <property type="project" value="EnsemblFungi"/>
</dbReference>
<dbReference type="GO" id="GO:0061499">
    <property type="term" value="C:outer plaque of mitotic spindle pole body"/>
    <property type="evidence" value="ECO:0007669"/>
    <property type="project" value="EnsemblFungi"/>
</dbReference>
<dbReference type="GO" id="GO:0005525">
    <property type="term" value="F:GTP binding"/>
    <property type="evidence" value="ECO:0007669"/>
    <property type="project" value="UniProtKB-KW"/>
</dbReference>
<dbReference type="GO" id="GO:0031122">
    <property type="term" value="P:cytoplasmic microtubule organization"/>
    <property type="evidence" value="ECO:0007669"/>
    <property type="project" value="InterPro"/>
</dbReference>
<dbReference type="GO" id="GO:0007020">
    <property type="term" value="P:microtubule nucleation"/>
    <property type="evidence" value="ECO:0007669"/>
    <property type="project" value="EnsemblFungi"/>
</dbReference>
<dbReference type="GO" id="GO:1902408">
    <property type="term" value="P:mitotic cytokinesis, division site positioning"/>
    <property type="evidence" value="ECO:0007669"/>
    <property type="project" value="EnsemblFungi"/>
</dbReference>
<dbReference type="GO" id="GO:0051256">
    <property type="term" value="P:mitotic spindle midzone assembly"/>
    <property type="evidence" value="ECO:0007669"/>
    <property type="project" value="EnsemblFungi"/>
</dbReference>
<dbReference type="CDD" id="cd02188">
    <property type="entry name" value="gamma_tubulin"/>
    <property type="match status" value="1"/>
</dbReference>
<dbReference type="FunFam" id="1.10.287.600:FF:000004">
    <property type="entry name" value="Tubulin gamma chain"/>
    <property type="match status" value="1"/>
</dbReference>
<dbReference type="FunFam" id="3.30.1330.20:FF:000003">
    <property type="entry name" value="Tubulin gamma chain"/>
    <property type="match status" value="1"/>
</dbReference>
<dbReference type="FunFam" id="3.40.50.1440:FF:000012">
    <property type="entry name" value="Tubulin gamma chain"/>
    <property type="match status" value="1"/>
</dbReference>
<dbReference type="Gene3D" id="1.10.287.600">
    <property type="entry name" value="Helix hairpin bin"/>
    <property type="match status" value="1"/>
</dbReference>
<dbReference type="Gene3D" id="3.30.1330.20">
    <property type="entry name" value="Tubulin/FtsZ, C-terminal domain"/>
    <property type="match status" value="1"/>
</dbReference>
<dbReference type="Gene3D" id="3.40.50.1440">
    <property type="entry name" value="Tubulin/FtsZ, GTPase domain"/>
    <property type="match status" value="1"/>
</dbReference>
<dbReference type="InterPro" id="IPR002454">
    <property type="entry name" value="Gamma_tubulin"/>
</dbReference>
<dbReference type="InterPro" id="IPR008280">
    <property type="entry name" value="Tub_FtsZ_C"/>
</dbReference>
<dbReference type="InterPro" id="IPR000217">
    <property type="entry name" value="Tubulin"/>
</dbReference>
<dbReference type="InterPro" id="IPR037103">
    <property type="entry name" value="Tubulin/FtsZ-like_C"/>
</dbReference>
<dbReference type="InterPro" id="IPR018316">
    <property type="entry name" value="Tubulin/FtsZ_2-layer-sand-dom"/>
</dbReference>
<dbReference type="InterPro" id="IPR036525">
    <property type="entry name" value="Tubulin/FtsZ_GTPase_sf"/>
</dbReference>
<dbReference type="InterPro" id="IPR023123">
    <property type="entry name" value="Tubulin_C"/>
</dbReference>
<dbReference type="InterPro" id="IPR017975">
    <property type="entry name" value="Tubulin_CS"/>
</dbReference>
<dbReference type="InterPro" id="IPR003008">
    <property type="entry name" value="Tubulin_FtsZ_GTPase"/>
</dbReference>
<dbReference type="PANTHER" id="PTHR11588">
    <property type="entry name" value="TUBULIN"/>
    <property type="match status" value="1"/>
</dbReference>
<dbReference type="Pfam" id="PF00091">
    <property type="entry name" value="Tubulin"/>
    <property type="match status" value="1"/>
</dbReference>
<dbReference type="Pfam" id="PF03953">
    <property type="entry name" value="Tubulin_C"/>
    <property type="match status" value="1"/>
</dbReference>
<dbReference type="PRINTS" id="PR01164">
    <property type="entry name" value="GAMMATUBULIN"/>
</dbReference>
<dbReference type="PRINTS" id="PR01161">
    <property type="entry name" value="TUBULIN"/>
</dbReference>
<dbReference type="SMART" id="SM00864">
    <property type="entry name" value="Tubulin"/>
    <property type="match status" value="1"/>
</dbReference>
<dbReference type="SMART" id="SM00865">
    <property type="entry name" value="Tubulin_C"/>
    <property type="match status" value="1"/>
</dbReference>
<dbReference type="SUPFAM" id="SSF55307">
    <property type="entry name" value="Tubulin C-terminal domain-like"/>
    <property type="match status" value="1"/>
</dbReference>
<dbReference type="SUPFAM" id="SSF52490">
    <property type="entry name" value="Tubulin nucleotide-binding domain-like"/>
    <property type="match status" value="1"/>
</dbReference>
<dbReference type="PROSITE" id="PS00227">
    <property type="entry name" value="TUBULIN"/>
    <property type="match status" value="1"/>
</dbReference>
<accession>Q9Y882</accession>
<gene>
    <name type="primary">tug1</name>
    <name type="synonym">gtb1</name>
</gene>
<protein>
    <recommendedName>
        <fullName>Tubulin gamma chain</fullName>
    </recommendedName>
    <alternativeName>
        <fullName>Gamma-tubulin</fullName>
    </alternativeName>
</protein>
<keyword id="KW-0963">Cytoplasm</keyword>
<keyword id="KW-0206">Cytoskeleton</keyword>
<keyword id="KW-0342">GTP-binding</keyword>
<keyword id="KW-0493">Microtubule</keyword>
<keyword id="KW-0547">Nucleotide-binding</keyword>
<feature type="chain" id="PRO_0000048479" description="Tubulin gamma chain">
    <location>
        <begin position="1"/>
        <end position="446"/>
    </location>
</feature>
<feature type="binding site" evidence="1">
    <location>
        <begin position="142"/>
        <end position="148"/>
    </location>
    <ligand>
        <name>GTP</name>
        <dbReference type="ChEBI" id="CHEBI:37565"/>
    </ligand>
</feature>
<comment type="function">
    <text>Tubulin is the major constituent of microtubules. The gamma chain is found at microtubule organizing centers (MTOC) such as the spindle poles or the centrosome, suggesting that it is involved in the minus-end nucleation of microtubule assembly.</text>
</comment>
<comment type="subcellular location">
    <subcellularLocation>
        <location evidence="2">Cytoplasm</location>
        <location evidence="2">Cytoskeleton</location>
        <location evidence="2">Microtubule organizing center</location>
        <location evidence="2">Spindle pole body</location>
    </subcellularLocation>
</comment>
<comment type="similarity">
    <text evidence="2">Belongs to the tubulin family.</text>
</comment>
<reference key="1">
    <citation type="submission" date="1999-06" db="EMBL/GenBank/DDBJ databases">
        <title>Isolation and characterization of gamma-tubulin gene from Schizosaccharomyces japonicus.</title>
        <authorList>
            <person name="Horio T."/>
            <person name="Shimizu M."/>
            <person name="Akashi T."/>
            <person name="Tanaka K."/>
        </authorList>
    </citation>
    <scope>NUCLEOTIDE SEQUENCE [GENOMIC DNA]</scope>
</reference>
<evidence type="ECO:0000255" key="1"/>
<evidence type="ECO:0000305" key="2"/>
<proteinExistence type="inferred from homology"/>
<sequence length="446" mass="50159">MGREIITLQAGQCGNQVGSQFWQQLCLEHGICPDGTLEDFATEGLDRKDVFFYQSDDTRYIPRAILLDLEPRVVNNILSDTYGSLYNPENIFVATDGGGAGNNWAHGYAHAEKIFEDIVDMIDREAEGSDSLEGFSLLHSIAGGTGSGLGSYLLERLNDRFPKKIVQTYSVFPNNRSVSDVVVQPYNSLLTLKRLTLNADAVVVLDNAALAHIAADRLHIQNPTFHQQNQLVSTVMSASTTTLRYPGYMNNDLVSIIASLIPTPRCHFLSTSYTPFTSQQVEDARTIRKTTVLDVMRRLLQPKNRMVSVNPGKQSCFISILNIIQGEADPNDVHKSLLRIRERKLATFIPWGPASIQVALSKKSPYIKTNHRVSGLMLANHTSIASLFKRTLDQYDRLRKRNAFLDQYRKESIFENSLDEFDNSREVVADLIREYEACEQPEYLSM</sequence>
<name>TBG_SCHJP</name>